<name>DGTL1_ROSDO</name>
<feature type="chain" id="PRO_1000164739" description="Deoxyguanosinetriphosphate triphosphohydrolase-like protein">
    <location>
        <begin position="1"/>
        <end position="387"/>
    </location>
</feature>
<feature type="domain" description="HD" evidence="2">
    <location>
        <begin position="62"/>
        <end position="198"/>
    </location>
</feature>
<feature type="region of interest" description="Disordered" evidence="3">
    <location>
        <begin position="1"/>
        <end position="26"/>
    </location>
</feature>
<feature type="compositionally biased region" description="Basic and acidic residues" evidence="3">
    <location>
        <begin position="17"/>
        <end position="26"/>
    </location>
</feature>
<gene>
    <name type="ordered locus">RD1_3167</name>
</gene>
<dbReference type="EMBL" id="CP000362">
    <property type="protein sequence ID" value="ABG32674.1"/>
    <property type="molecule type" value="Genomic_DNA"/>
</dbReference>
<dbReference type="RefSeq" id="WP_011569290.1">
    <property type="nucleotide sequence ID" value="NC_008209.1"/>
</dbReference>
<dbReference type="SMR" id="Q164B9"/>
<dbReference type="STRING" id="375451.RD1_3167"/>
<dbReference type="KEGG" id="rde:RD1_3167"/>
<dbReference type="eggNOG" id="COG0232">
    <property type="taxonomic scope" value="Bacteria"/>
</dbReference>
<dbReference type="HOGENOM" id="CLU_028163_1_0_5"/>
<dbReference type="OrthoDB" id="9803619at2"/>
<dbReference type="Proteomes" id="UP000007029">
    <property type="component" value="Chromosome"/>
</dbReference>
<dbReference type="GO" id="GO:0008832">
    <property type="term" value="F:dGTPase activity"/>
    <property type="evidence" value="ECO:0007669"/>
    <property type="project" value="TreeGrafter"/>
</dbReference>
<dbReference type="GO" id="GO:0006203">
    <property type="term" value="P:dGTP catabolic process"/>
    <property type="evidence" value="ECO:0007669"/>
    <property type="project" value="TreeGrafter"/>
</dbReference>
<dbReference type="CDD" id="cd00077">
    <property type="entry name" value="HDc"/>
    <property type="match status" value="1"/>
</dbReference>
<dbReference type="Gene3D" id="1.10.3210.10">
    <property type="entry name" value="Hypothetical protein af1432"/>
    <property type="match status" value="1"/>
</dbReference>
<dbReference type="HAMAP" id="MF_01212">
    <property type="entry name" value="dGTPase_type2"/>
    <property type="match status" value="1"/>
</dbReference>
<dbReference type="InterPro" id="IPR006261">
    <property type="entry name" value="dGTPase"/>
</dbReference>
<dbReference type="InterPro" id="IPR050135">
    <property type="entry name" value="dGTPase-like"/>
</dbReference>
<dbReference type="InterPro" id="IPR023023">
    <property type="entry name" value="dNTPase_2"/>
</dbReference>
<dbReference type="InterPro" id="IPR003607">
    <property type="entry name" value="HD/PDEase_dom"/>
</dbReference>
<dbReference type="InterPro" id="IPR006674">
    <property type="entry name" value="HD_domain"/>
</dbReference>
<dbReference type="InterPro" id="IPR026875">
    <property type="entry name" value="PHydrolase_assoc_dom"/>
</dbReference>
<dbReference type="NCBIfam" id="TIGR01353">
    <property type="entry name" value="dGTP_triPase"/>
    <property type="match status" value="1"/>
</dbReference>
<dbReference type="NCBIfam" id="NF002326">
    <property type="entry name" value="PRK01286.1-1"/>
    <property type="match status" value="1"/>
</dbReference>
<dbReference type="NCBIfam" id="NF002328">
    <property type="entry name" value="PRK01286.1-3"/>
    <property type="match status" value="1"/>
</dbReference>
<dbReference type="PANTHER" id="PTHR11373:SF43">
    <property type="entry name" value="DEOXYGUANOSINETRIPHOSPHATE TRIPHOSPHOHYDROLASE-LIKE PROTEIN"/>
    <property type="match status" value="1"/>
</dbReference>
<dbReference type="PANTHER" id="PTHR11373">
    <property type="entry name" value="DEOXYNUCLEOSIDE TRIPHOSPHATE TRIPHOSPHOHYDROLASE"/>
    <property type="match status" value="1"/>
</dbReference>
<dbReference type="Pfam" id="PF01966">
    <property type="entry name" value="HD"/>
    <property type="match status" value="1"/>
</dbReference>
<dbReference type="Pfam" id="PF13286">
    <property type="entry name" value="HD_assoc"/>
    <property type="match status" value="1"/>
</dbReference>
<dbReference type="SMART" id="SM00471">
    <property type="entry name" value="HDc"/>
    <property type="match status" value="1"/>
</dbReference>
<dbReference type="SUPFAM" id="SSF109604">
    <property type="entry name" value="HD-domain/PDEase-like"/>
    <property type="match status" value="1"/>
</dbReference>
<dbReference type="PROSITE" id="PS51831">
    <property type="entry name" value="HD"/>
    <property type="match status" value="1"/>
</dbReference>
<protein>
    <recommendedName>
        <fullName evidence="1">Deoxyguanosinetriphosphate triphosphohydrolase-like protein</fullName>
    </recommendedName>
</protein>
<proteinExistence type="inferred from homology"/>
<reference key="1">
    <citation type="journal article" date="2007" name="J. Bacteriol.">
        <title>The complete genome sequence of Roseobacter denitrificans reveals a mixotrophic rather than photosynthetic metabolism.</title>
        <authorList>
            <person name="Swingley W.D."/>
            <person name="Sadekar S."/>
            <person name="Mastrian S.D."/>
            <person name="Matthies H.J."/>
            <person name="Hao J."/>
            <person name="Ramos H."/>
            <person name="Acharya C.R."/>
            <person name="Conrad A.L."/>
            <person name="Taylor H.L."/>
            <person name="Dejesa L.C."/>
            <person name="Shah M.K."/>
            <person name="O'Huallachain M.E."/>
            <person name="Lince M.T."/>
            <person name="Blankenship R.E."/>
            <person name="Beatty J.T."/>
            <person name="Touchman J.W."/>
        </authorList>
    </citation>
    <scope>NUCLEOTIDE SEQUENCE [LARGE SCALE GENOMIC DNA]</scope>
    <source>
        <strain>ATCC 33942 / OCh 114</strain>
    </source>
</reference>
<organism>
    <name type="scientific">Roseobacter denitrificans (strain ATCC 33942 / OCh 114)</name>
    <name type="common">Erythrobacter sp. (strain OCh 114)</name>
    <name type="synonym">Roseobacter denitrificans</name>
    <dbReference type="NCBI Taxonomy" id="375451"/>
    <lineage>
        <taxon>Bacteria</taxon>
        <taxon>Pseudomonadati</taxon>
        <taxon>Pseudomonadota</taxon>
        <taxon>Alphaproteobacteria</taxon>
        <taxon>Rhodobacterales</taxon>
        <taxon>Roseobacteraceae</taxon>
        <taxon>Roseobacter</taxon>
    </lineage>
</organism>
<keyword id="KW-0378">Hydrolase</keyword>
<keyword id="KW-1185">Reference proteome</keyword>
<comment type="similarity">
    <text evidence="1">Belongs to the dGTPase family. Type 2 subfamily.</text>
</comment>
<sequence>MTAPYASDPQRARGRRVKEEESTFRSSFQRDRDRIIHASAFRRLKHKTQVFIEHEGDYYRTRLTHSIEVAQVARTIAGALNLNQELTEAVALAHDLGHTPFGHTGEDALSDMMAPYGGFDHNAQAIRIVTHLERHYADFDGLNLTWETLEGLAKHNGPVTGDIPWALKAYNDTHDLELGTFASAEAQVAAIADDVAYNHHDLHDGLRAELFSTDELAELPILNMCFAEVDRLYPGLNYYRRRHEALRRFFGVLVEDVIQLAQARLMTLQPKTVTDIRAADRAIIRFSDDVFDDLKVIRSFLFDRMYRAPSVVVMRAQVTRVVEELFPHFMAHPDQLPKQWRKDVEAISSETELARIVSDYISGMTDRFALQEHARLIHGTTPTETER</sequence>
<accession>Q164B9</accession>
<evidence type="ECO:0000255" key="1">
    <source>
        <dbReference type="HAMAP-Rule" id="MF_01212"/>
    </source>
</evidence>
<evidence type="ECO:0000255" key="2">
    <source>
        <dbReference type="PROSITE-ProRule" id="PRU01175"/>
    </source>
</evidence>
<evidence type="ECO:0000256" key="3">
    <source>
        <dbReference type="SAM" id="MobiDB-lite"/>
    </source>
</evidence>